<name>ENV_MCFF3</name>
<feature type="signal peptide" evidence="2">
    <location>
        <begin position="1"/>
        <end position="32"/>
    </location>
</feature>
<feature type="chain" id="PRO_0000239578" description="Envelope glycoprotein">
    <location>
        <begin position="33"/>
        <end position="640"/>
    </location>
</feature>
<feature type="chain" id="PRO_0000040742" description="Surface protein" evidence="1">
    <location>
        <begin position="33"/>
        <end position="441"/>
    </location>
</feature>
<feature type="chain" id="PRO_0000040743" description="Transmembrane protein" evidence="1">
    <location>
        <begin position="442"/>
        <end position="621"/>
    </location>
</feature>
<feature type="peptide" id="PRO_0000040744" description="R-peptide" evidence="1">
    <location>
        <begin position="622"/>
        <end position="640"/>
    </location>
</feature>
<feature type="topological domain" description="Extracellular" evidence="2">
    <location>
        <begin position="33"/>
        <end position="582"/>
    </location>
</feature>
<feature type="transmembrane region" description="Helical" evidence="2">
    <location>
        <begin position="583"/>
        <end position="603"/>
    </location>
</feature>
<feature type="topological domain" description="Cytoplasmic" evidence="2">
    <location>
        <begin position="604"/>
        <end position="640"/>
    </location>
</feature>
<feature type="region of interest" description="Fusion peptide" evidence="1">
    <location>
        <begin position="444"/>
        <end position="464"/>
    </location>
</feature>
<feature type="region of interest" description="Immunosuppression" evidence="1">
    <location>
        <begin position="510"/>
        <end position="526"/>
    </location>
</feature>
<feature type="coiled-coil region" evidence="2">
    <location>
        <begin position="473"/>
        <end position="509"/>
    </location>
</feature>
<feature type="short sequence motif" description="CXXC">
    <location>
        <begin position="307"/>
        <end position="310"/>
    </location>
</feature>
<feature type="short sequence motif" description="CX6CC">
    <location>
        <begin position="527"/>
        <end position="535"/>
    </location>
</feature>
<feature type="short sequence motif" description="YXXL motif; contains endocytosis signal" evidence="1">
    <location>
        <begin position="627"/>
        <end position="630"/>
    </location>
</feature>
<feature type="site" description="Cleavage; by host" evidence="1">
    <location>
        <begin position="441"/>
        <end position="442"/>
    </location>
</feature>
<feature type="site" description="Cleavage; by viral protease p14" evidence="1">
    <location>
        <begin position="621"/>
        <end position="622"/>
    </location>
</feature>
<feature type="glycosylation site" description="N-linked (GlcNAc...) asparagine; by host" evidence="1">
    <location>
        <position position="43"/>
    </location>
</feature>
<feature type="glycosylation site" description="N-linked (GlcNAc...) asparagine; by host" evidence="2">
    <location>
        <position position="58"/>
    </location>
</feature>
<feature type="glycosylation site" description="N-linked (GlcNAc...) asparagine; by host" evidence="1">
    <location>
        <position position="297"/>
    </location>
</feature>
<feature type="glycosylation site" description="N-linked (GlcNAc...) asparagine; by host" evidence="2">
    <location>
        <position position="329"/>
    </location>
</feature>
<feature type="glycosylation site" description="N-linked (GlcNAc...) asparagine; by host" evidence="2">
    <location>
        <position position="336"/>
    </location>
</feature>
<feature type="glycosylation site" description="N-linked (GlcNAc...) asparagine; by host" evidence="2">
    <location>
        <position position="369"/>
    </location>
</feature>
<feature type="disulfide bond" evidence="1">
    <location>
        <begin position="109"/>
        <end position="126"/>
    </location>
</feature>
<feature type="disulfide bond" evidence="1">
    <location>
        <begin position="118"/>
        <end position="131"/>
    </location>
</feature>
<feature type="disulfide bond" description="Interchain (between SU and TM chains, or C-310 with C-535); in linked form" evidence="1">
    <location>
        <begin position="307"/>
        <end position="535"/>
    </location>
</feature>
<feature type="disulfide bond" evidence="1">
    <location>
        <begin position="307"/>
        <end position="310"/>
    </location>
</feature>
<feature type="disulfide bond" evidence="1">
    <location>
        <begin position="337"/>
        <end position="391"/>
    </location>
</feature>
<feature type="disulfide bond" evidence="1">
    <location>
        <begin position="356"/>
        <end position="368"/>
    </location>
</feature>
<feature type="disulfide bond" evidence="1">
    <location>
        <begin position="398"/>
        <end position="411"/>
    </location>
</feature>
<feature type="disulfide bond" evidence="1">
    <location>
        <begin position="527"/>
        <end position="534"/>
    </location>
</feature>
<feature type="sequence variant" description="In strain: Isolate CI-4.">
    <location>
        <begin position="315"/>
        <end position="542"/>
    </location>
</feature>
<accession>P03388</accession>
<accession>Q85501</accession>
<proteinExistence type="inferred from homology"/>
<reference key="1">
    <citation type="journal article" date="1984" name="J. Virol.">
        <title>Envelope gene sequence of two in vitro-generated mink cell focus-forming murine leukemia viruses which contain the entire gp70 sequence of the endogenous nonecotropic parent.</title>
        <authorList>
            <person name="Mark G.E."/>
            <person name="Rapp U.R."/>
        </authorList>
    </citation>
    <scope>NUCLEOTIDE SEQUENCE [GENOMIC RNA]</scope>
    <source>
        <strain>Isolate CI-3</strain>
        <strain>Isolate CI-4</strain>
    </source>
</reference>
<gene>
    <name type="primary">env</name>
</gene>
<organismHost>
    <name type="scientific">Mus musculus</name>
    <name type="common">Mouse</name>
    <dbReference type="NCBI Taxonomy" id="10090"/>
</organismHost>
<comment type="function">
    <text evidence="1">The surface protein (SU) attaches the virus to the host cell by binding to its receptor. This interaction triggers the refolding of the transmembrane protein (TM) and is thought to activate its fusogenic potential by unmasking its fusion peptide. Fusion occurs at the host cell plasma membrane (By similarity).</text>
</comment>
<comment type="function">
    <text evidence="1">The transmembrane protein (TM) acts as a class I viral fusion protein. Under the current model, the protein has at least 3 conformational states: pre-fusion native state, pre-hairpin intermediate state, and post-fusion hairpin state. During viral and target cell membrane fusion, the coiled coil regions (heptad repeats) assume a trimer-of-hairpins structure, positioning the fusion peptide in close proximity to the C-terminal region of the ectodomain. The formation of this structure appears to drive apposition and subsequent fusion of viral and target cell membranes. Membranes fusion leads to delivery of the nucleocapsid into the cytoplasm (By similarity).</text>
</comment>
<comment type="subunit">
    <text evidence="1">The mature envelope protein (Env) consists of a trimer of SU-TM heterodimers attached by a labile interchain disulfide bond.</text>
</comment>
<comment type="subcellular location">
    <molecule>Transmembrane protein</molecule>
    <subcellularLocation>
        <location evidence="1">Virion membrane</location>
        <topology evidence="1">Single-pass type I membrane protein</topology>
    </subcellularLocation>
    <subcellularLocation>
        <location evidence="1">Host cell membrane</location>
        <topology evidence="1">Single-pass type I membrane protein</topology>
    </subcellularLocation>
</comment>
<comment type="subcellular location">
    <molecule>Surface protein</molecule>
    <subcellularLocation>
        <location>Virion membrane</location>
        <topology>Peripheral membrane protein</topology>
    </subcellularLocation>
    <subcellularLocation>
        <location evidence="1">Host cell membrane</location>
        <topology evidence="1">Peripheral membrane protein</topology>
    </subcellularLocation>
    <text evidence="1">The surface protein is not anchored to the viral envelope, but associates with the virion surface through its binding to TM. Both proteins are thought to be concentrated at the site of budding and incorporated into the virions possibly by contacts between the cytoplasmic tail of Env and the N-terminus of Gag (By similarity).</text>
</comment>
<comment type="subcellular location">
    <molecule>R-peptide</molecule>
    <subcellularLocation>
        <location evidence="1">Host cell membrane</location>
        <topology evidence="1">Peripheral membrane protein</topology>
    </subcellularLocation>
    <text evidence="1">The R-peptide is membrane-associated through its palmitate.</text>
</comment>
<comment type="domain">
    <text evidence="1">The 17 amino acids long immunosuppressive region is present in many retroviral envelope proteins. Synthetic peptides derived from this relatively conserved sequence inhibit immune function in vitro and in vivo (By similarity).</text>
</comment>
<comment type="domain">
    <text>The YXXL motif is involved in determining the exact site of viral release at the surface of infected mononuclear cells and promotes endocytosis.</text>
</comment>
<comment type="PTM">
    <text evidence="1">Specific enzymatic cleavages in vivo yield mature proteins. Envelope glycoproteins are synthesized as an inactive precursor that is N-glycosylated and processed likely by host cell furin or by a furin-like protease in the Golgi to yield the mature SU and TM proteins. The cleavage site between SU and TM requires the minimal sequence [KR]-X-[KR]-R. The R-peptide is released from the C-terminus of the cytoplasmic tail of the TM protein upon particle formation as a result of proteolytic cleavage by the viral protease. Cleavage of this peptide is required for TM to become fusogenic (By similarity).</text>
</comment>
<comment type="PTM">
    <text evidence="1">The CXXC motif is highly conserved across a broad range of retroviral envelope proteins. It is thought to participate in the formation of a labile disulfide bond possibly with the CX6CC motif present in the transmembrane protein. Isomerization of the intersubunit disulfide bond to an SU intrachain disulfide bond is thought to occur upon receptor recognition in order to allow membrane fusion (By similarity).</text>
</comment>
<comment type="PTM">
    <text evidence="1">The R-peptide is palmitoylated.</text>
</comment>
<comment type="miscellaneous">
    <text>The sequence shown is that of isolate CI-3.</text>
</comment>
<dbReference type="EMBL" id="K02725">
    <property type="protein sequence ID" value="AAA46375.1"/>
    <property type="molecule type" value="Genomic_RNA"/>
</dbReference>
<dbReference type="EMBL" id="K02726">
    <property type="protein sequence ID" value="AAA46376.1"/>
    <property type="molecule type" value="Genomic_RNA"/>
</dbReference>
<dbReference type="SMR" id="P03388"/>
<dbReference type="GlyCosmos" id="P03388">
    <property type="glycosylation" value="6 sites, No reported glycans"/>
</dbReference>
<dbReference type="SwissPalm" id="P03388"/>
<dbReference type="GO" id="GO:0020002">
    <property type="term" value="C:host cell plasma membrane"/>
    <property type="evidence" value="ECO:0007669"/>
    <property type="project" value="UniProtKB-SubCell"/>
</dbReference>
<dbReference type="GO" id="GO:0016020">
    <property type="term" value="C:membrane"/>
    <property type="evidence" value="ECO:0007669"/>
    <property type="project" value="UniProtKB-KW"/>
</dbReference>
<dbReference type="GO" id="GO:0019031">
    <property type="term" value="C:viral envelope"/>
    <property type="evidence" value="ECO:0007669"/>
    <property type="project" value="UniProtKB-KW"/>
</dbReference>
<dbReference type="GO" id="GO:0055036">
    <property type="term" value="C:virion membrane"/>
    <property type="evidence" value="ECO:0007669"/>
    <property type="project" value="UniProtKB-SubCell"/>
</dbReference>
<dbReference type="GO" id="GO:0019064">
    <property type="term" value="P:fusion of virus membrane with host plasma membrane"/>
    <property type="evidence" value="ECO:0007669"/>
    <property type="project" value="UniProtKB-KW"/>
</dbReference>
<dbReference type="GO" id="GO:0046718">
    <property type="term" value="P:symbiont entry into host cell"/>
    <property type="evidence" value="ECO:0007669"/>
    <property type="project" value="UniProtKB-KW"/>
</dbReference>
<dbReference type="GO" id="GO:0019062">
    <property type="term" value="P:virion attachment to host cell"/>
    <property type="evidence" value="ECO:0007669"/>
    <property type="project" value="UniProtKB-KW"/>
</dbReference>
<dbReference type="CDD" id="cd09851">
    <property type="entry name" value="HTLV-1-like_HR1-HR2"/>
    <property type="match status" value="1"/>
</dbReference>
<dbReference type="FunFam" id="1.10.287.210:FF:000005">
    <property type="entry name" value="Envelope glycoprotein"/>
    <property type="match status" value="1"/>
</dbReference>
<dbReference type="Gene3D" id="1.10.287.210">
    <property type="match status" value="1"/>
</dbReference>
<dbReference type="Gene3D" id="3.90.310.10">
    <property type="entry name" value="ENV polyprotein, receptor-binding domain"/>
    <property type="match status" value="1"/>
</dbReference>
<dbReference type="InterPro" id="IPR008981">
    <property type="entry name" value="FMuLV_rcpt-bd"/>
</dbReference>
<dbReference type="InterPro" id="IPR018154">
    <property type="entry name" value="TLV/ENV_coat_polyprotein"/>
</dbReference>
<dbReference type="PANTHER" id="PTHR10424:SF72">
    <property type="entry name" value="BC035947 PROTEIN-RELATED"/>
    <property type="match status" value="1"/>
</dbReference>
<dbReference type="PANTHER" id="PTHR10424">
    <property type="entry name" value="VIRAL ENVELOPE PROTEIN"/>
    <property type="match status" value="1"/>
</dbReference>
<dbReference type="Pfam" id="PF00429">
    <property type="entry name" value="TLV_coat"/>
    <property type="match status" value="2"/>
</dbReference>
<dbReference type="SUPFAM" id="SSF49830">
    <property type="entry name" value="ENV polyprotein, receptor-binding domain"/>
    <property type="match status" value="1"/>
</dbReference>
<dbReference type="SUPFAM" id="SSF58069">
    <property type="entry name" value="Virus ectodomain"/>
    <property type="match status" value="1"/>
</dbReference>
<organism>
    <name type="scientific">Mink cell focus-forming murine leukemia virus (isolate CI-3)</name>
    <dbReference type="NCBI Taxonomy" id="11936"/>
    <lineage>
        <taxon>Viruses</taxon>
        <taxon>Riboviria</taxon>
        <taxon>Pararnavirae</taxon>
        <taxon>Artverviricota</taxon>
        <taxon>Revtraviricetes</taxon>
        <taxon>Ortervirales</taxon>
        <taxon>Retroviridae</taxon>
        <taxon>Orthoretrovirinae</taxon>
        <taxon>Gammaretrovirus</taxon>
        <taxon>Murine leukemia virus</taxon>
    </lineage>
</organism>
<protein>
    <recommendedName>
        <fullName>Envelope glycoprotein</fullName>
    </recommendedName>
    <alternativeName>
        <fullName>Env polyprotein</fullName>
    </alternativeName>
    <component>
        <recommendedName>
            <fullName>Surface protein</fullName>
            <shortName>SU</shortName>
        </recommendedName>
        <alternativeName>
            <fullName>Glycoprotein 70</fullName>
            <shortName>gp70</shortName>
        </alternativeName>
    </component>
    <component>
        <recommendedName>
            <fullName>Transmembrane protein</fullName>
            <shortName>TM</shortName>
        </recommendedName>
        <alternativeName>
            <fullName>Envelope protein p15E</fullName>
        </alternativeName>
    </component>
    <component>
        <recommendedName>
            <fullName>R-peptide</fullName>
        </recommendedName>
        <alternativeName>
            <fullName>p2E</fullName>
        </alternativeName>
    </component>
</protein>
<sequence>MEGPAFSKPLKDKINPWGPLIILGILIRAGVSVQHDSPHQVFNVTWRVTNLMTGQTANATSLLGTMTDAFPKLYFDLCDLVGDDWDETGLGCRTPGGRKRARTFDFYVCPGHTVPTGCGGPREGYCGKWGCETTGQAYWKPSSSWDLISLKRGNTPRNQGPCYDSSAVSSDIKGATPGGRCNPLVLEFTDAGKKASWDGPKVWGLRLYRSTGTDPVTRFSLTRQVLNIGPRVPIGPNPVITDQLPPSRPVQIMLPRPPQPPPPGAASIVPETAPPSQQLGTGDRLLNLVNGAYQALNLTSPDKTQECWLCLVAGPPYYEGVAVLGTYSNHTSAPANCSVASQHKLTLSGVAGRGLCIAAFPKTHQALCNTTQKTSDGSYHLAAPAGTIWACNTGLTPCLSTTVLDLTTDYCVLVELWPKVTYHSPSYVYGQFEKKKTKYKREPVSLTLALLLGGLTMGGIAAGVGTGTTALVATQQFQQLQAAMHDDLKEVEKSITNLEKSLTSLSEVVLQNRRGLDLLFLKEGGLCAALKEECCFYADHTGLVRDSMAKLRERLSQRQKLFESQQGWFEGLFNKSPWFTTLISTIMGPLIILLLILLFGPWILNRLVQFIKDRISVVQALVLTQQYHQLKTIGDCKSRE</sequence>
<keyword id="KW-0165">Cleavage on pair of basic residues</keyword>
<keyword id="KW-0175">Coiled coil</keyword>
<keyword id="KW-1015">Disulfide bond</keyword>
<keyword id="KW-1169">Fusion of virus membrane with host cell membrane</keyword>
<keyword id="KW-1168">Fusion of virus membrane with host membrane</keyword>
<keyword id="KW-0325">Glycoprotein</keyword>
<keyword id="KW-1032">Host cell membrane</keyword>
<keyword id="KW-1043">Host membrane</keyword>
<keyword id="KW-0945">Host-virus interaction</keyword>
<keyword id="KW-0449">Lipoprotein</keyword>
<keyword id="KW-0472">Membrane</keyword>
<keyword id="KW-0564">Palmitate</keyword>
<keyword id="KW-0732">Signal</keyword>
<keyword id="KW-0812">Transmembrane</keyword>
<keyword id="KW-1133">Transmembrane helix</keyword>
<keyword id="KW-1161">Viral attachment to host cell</keyword>
<keyword id="KW-0261">Viral envelope protein</keyword>
<keyword id="KW-1162">Viral penetration into host cytoplasm</keyword>
<keyword id="KW-0946">Virion</keyword>
<keyword id="KW-1160">Virus entry into host cell</keyword>
<evidence type="ECO:0000250" key="1"/>
<evidence type="ECO:0000255" key="2"/>